<dbReference type="EMBL" id="DQ437107">
    <property type="protein sequence ID" value="ABD75374.1"/>
    <property type="molecule type" value="mRNA"/>
</dbReference>
<dbReference type="RefSeq" id="XP_044133558.1">
    <property type="nucleotide sequence ID" value="XM_044277623.1"/>
</dbReference>
<dbReference type="SMR" id="A4K526"/>
<dbReference type="GeneID" id="122926248"/>
<dbReference type="OrthoDB" id="269173at2759"/>
<dbReference type="GO" id="GO:0005886">
    <property type="term" value="C:plasma membrane"/>
    <property type="evidence" value="ECO:0007669"/>
    <property type="project" value="UniProtKB-SubCell"/>
</dbReference>
<dbReference type="InterPro" id="IPR006696">
    <property type="entry name" value="DUF423"/>
</dbReference>
<dbReference type="PANTHER" id="PTHR43461">
    <property type="entry name" value="TRANSMEMBRANE PROTEIN 256"/>
    <property type="match status" value="1"/>
</dbReference>
<dbReference type="PANTHER" id="PTHR43461:SF1">
    <property type="entry name" value="TRANSMEMBRANE PROTEIN 256"/>
    <property type="match status" value="1"/>
</dbReference>
<dbReference type="Pfam" id="PF04241">
    <property type="entry name" value="DUF423"/>
    <property type="match status" value="1"/>
</dbReference>
<proteinExistence type="inferred from homology"/>
<accession>A4K526</accession>
<protein>
    <recommendedName>
        <fullName>Transmembrane protein 256 homolog</fullName>
    </recommendedName>
</protein>
<keyword id="KW-1003">Cell membrane</keyword>
<keyword id="KW-0472">Membrane</keyword>
<keyword id="KW-0732">Signal</keyword>
<keyword id="KW-0812">Transmembrane</keyword>
<keyword id="KW-1133">Transmembrane helix</keyword>
<sequence>MAAGRVWGRLGAVSGALAVTAGAYGAHGFRRSDRDEYLKELFETGNRYHFLHSLALLAVPHCRRPLLAGSLLTSGIVLFSGTFYYQALSGDPTLTKAAPYGGTLLILGWAAMAL</sequence>
<name>TM256_BUFGR</name>
<feature type="signal peptide" evidence="1">
    <location>
        <begin position="1"/>
        <end position="25"/>
    </location>
</feature>
<feature type="chain" id="PRO_0000294145" description="Transmembrane protein 256 homolog">
    <location>
        <begin position="26"/>
        <end position="114"/>
    </location>
</feature>
<feature type="topological domain" description="Extracellular" evidence="1">
    <location>
        <begin position="26"/>
        <end position="64"/>
    </location>
</feature>
<feature type="transmembrane region" description="Helical" evidence="1">
    <location>
        <begin position="65"/>
        <end position="85"/>
    </location>
</feature>
<feature type="topological domain" description="Cytoplasmic" evidence="1">
    <location>
        <begin position="86"/>
        <end position="93"/>
    </location>
</feature>
<feature type="transmembrane region" description="Helical" evidence="1">
    <location>
        <begin position="94"/>
        <end position="114"/>
    </location>
</feature>
<organism>
    <name type="scientific">Bufo gargarizans</name>
    <name type="common">Asian toad</name>
    <name type="synonym">Bufo bufo gargarizans</name>
    <dbReference type="NCBI Taxonomy" id="30331"/>
    <lineage>
        <taxon>Eukaryota</taxon>
        <taxon>Metazoa</taxon>
        <taxon>Chordata</taxon>
        <taxon>Craniata</taxon>
        <taxon>Vertebrata</taxon>
        <taxon>Euteleostomi</taxon>
        <taxon>Amphibia</taxon>
        <taxon>Batrachia</taxon>
        <taxon>Anura</taxon>
        <taxon>Neobatrachia</taxon>
        <taxon>Hyloidea</taxon>
        <taxon>Bufonidae</taxon>
        <taxon>Bufo</taxon>
    </lineage>
</organism>
<comment type="subcellular location">
    <subcellularLocation>
        <location evidence="2">Cell membrane</location>
        <topology evidence="2">Multi-pass membrane protein</topology>
    </subcellularLocation>
</comment>
<comment type="similarity">
    <text evidence="2">Belongs to the TMEM256 family.</text>
</comment>
<reference key="1">
    <citation type="submission" date="2006-02" db="EMBL/GenBank/DDBJ databases">
        <title>Identification of venom proteins from the Chinese toad, Bufo bufo gargarizans, using an integrated proteomic and transcriptomic strategy.</title>
        <authorList>
            <person name="Deng W."/>
        </authorList>
    </citation>
    <scope>NUCLEOTIDE SEQUENCE [MRNA]</scope>
    <source>
        <tissue>Venom gland</tissue>
    </source>
</reference>
<evidence type="ECO:0000255" key="1"/>
<evidence type="ECO:0000305" key="2"/>